<keyword id="KW-0028">Amino-acid biosynthesis</keyword>
<keyword id="KW-0055">Arginine biosynthesis</keyword>
<keyword id="KW-0067">ATP-binding</keyword>
<keyword id="KW-0963">Cytoplasm</keyword>
<keyword id="KW-0418">Kinase</keyword>
<keyword id="KW-0547">Nucleotide-binding</keyword>
<keyword id="KW-1185">Reference proteome</keyword>
<keyword id="KW-0808">Transferase</keyword>
<accession>B2HR28</accession>
<reference key="1">
    <citation type="journal article" date="2008" name="Genome Res.">
        <title>Insights from the complete genome sequence of Mycobacterium marinum on the evolution of Mycobacterium tuberculosis.</title>
        <authorList>
            <person name="Stinear T.P."/>
            <person name="Seemann T."/>
            <person name="Harrison P.F."/>
            <person name="Jenkin G.A."/>
            <person name="Davies J.K."/>
            <person name="Johnson P.D."/>
            <person name="Abdellah Z."/>
            <person name="Arrowsmith C."/>
            <person name="Chillingworth T."/>
            <person name="Churcher C."/>
            <person name="Clarke K."/>
            <person name="Cronin A."/>
            <person name="Davis P."/>
            <person name="Goodhead I."/>
            <person name="Holroyd N."/>
            <person name="Jagels K."/>
            <person name="Lord A."/>
            <person name="Moule S."/>
            <person name="Mungall K."/>
            <person name="Norbertczak H."/>
            <person name="Quail M.A."/>
            <person name="Rabbinowitsch E."/>
            <person name="Walker D."/>
            <person name="White B."/>
            <person name="Whitehead S."/>
            <person name="Small P.L."/>
            <person name="Brosch R."/>
            <person name="Ramakrishnan L."/>
            <person name="Fischbach M.A."/>
            <person name="Parkhill J."/>
            <person name="Cole S.T."/>
        </authorList>
    </citation>
    <scope>NUCLEOTIDE SEQUENCE [LARGE SCALE GENOMIC DNA]</scope>
    <source>
        <strain>ATCC BAA-535 / M</strain>
    </source>
</reference>
<evidence type="ECO:0000255" key="1">
    <source>
        <dbReference type="HAMAP-Rule" id="MF_00082"/>
    </source>
</evidence>
<feature type="chain" id="PRO_1000092865" description="Acetylglutamate kinase">
    <location>
        <begin position="1"/>
        <end position="293"/>
    </location>
</feature>
<feature type="binding site" evidence="1">
    <location>
        <begin position="68"/>
        <end position="69"/>
    </location>
    <ligand>
        <name>substrate</name>
    </ligand>
</feature>
<feature type="binding site" evidence="1">
    <location>
        <position position="90"/>
    </location>
    <ligand>
        <name>substrate</name>
    </ligand>
</feature>
<feature type="binding site" evidence="1">
    <location>
        <position position="189"/>
    </location>
    <ligand>
        <name>substrate</name>
    </ligand>
</feature>
<feature type="site" description="Transition state stabilizer" evidence="1">
    <location>
        <position position="33"/>
    </location>
</feature>
<feature type="site" description="Transition state stabilizer" evidence="1">
    <location>
        <position position="250"/>
    </location>
</feature>
<gene>
    <name evidence="1" type="primary">argB</name>
    <name type="ordered locus">MMAR_2464</name>
</gene>
<name>ARGB_MYCMM</name>
<organism>
    <name type="scientific">Mycobacterium marinum (strain ATCC BAA-535 / M)</name>
    <dbReference type="NCBI Taxonomy" id="216594"/>
    <lineage>
        <taxon>Bacteria</taxon>
        <taxon>Bacillati</taxon>
        <taxon>Actinomycetota</taxon>
        <taxon>Actinomycetes</taxon>
        <taxon>Mycobacteriales</taxon>
        <taxon>Mycobacteriaceae</taxon>
        <taxon>Mycobacterium</taxon>
        <taxon>Mycobacterium ulcerans group</taxon>
    </lineage>
</organism>
<proteinExistence type="inferred from homology"/>
<dbReference type="EC" id="2.7.2.8" evidence="1"/>
<dbReference type="EMBL" id="CP000854">
    <property type="protein sequence ID" value="ACC40914.1"/>
    <property type="molecule type" value="Genomic_DNA"/>
</dbReference>
<dbReference type="RefSeq" id="WP_012394206.1">
    <property type="nucleotide sequence ID" value="NC_010612.1"/>
</dbReference>
<dbReference type="SMR" id="B2HR28"/>
<dbReference type="STRING" id="216594.MMAR_2464"/>
<dbReference type="KEGG" id="mmi:MMAR_2464"/>
<dbReference type="eggNOG" id="COG0548">
    <property type="taxonomic scope" value="Bacteria"/>
</dbReference>
<dbReference type="HOGENOM" id="CLU_053680_0_0_11"/>
<dbReference type="OrthoDB" id="9803155at2"/>
<dbReference type="UniPathway" id="UPA00068">
    <property type="reaction ID" value="UER00107"/>
</dbReference>
<dbReference type="Proteomes" id="UP000001190">
    <property type="component" value="Chromosome"/>
</dbReference>
<dbReference type="GO" id="GO:0005737">
    <property type="term" value="C:cytoplasm"/>
    <property type="evidence" value="ECO:0007669"/>
    <property type="project" value="UniProtKB-SubCell"/>
</dbReference>
<dbReference type="GO" id="GO:0003991">
    <property type="term" value="F:acetylglutamate kinase activity"/>
    <property type="evidence" value="ECO:0007669"/>
    <property type="project" value="UniProtKB-UniRule"/>
</dbReference>
<dbReference type="GO" id="GO:0005524">
    <property type="term" value="F:ATP binding"/>
    <property type="evidence" value="ECO:0007669"/>
    <property type="project" value="UniProtKB-UniRule"/>
</dbReference>
<dbReference type="GO" id="GO:0042450">
    <property type="term" value="P:arginine biosynthetic process via ornithine"/>
    <property type="evidence" value="ECO:0007669"/>
    <property type="project" value="UniProtKB-UniRule"/>
</dbReference>
<dbReference type="GO" id="GO:0006526">
    <property type="term" value="P:L-arginine biosynthetic process"/>
    <property type="evidence" value="ECO:0007669"/>
    <property type="project" value="UniProtKB-UniPathway"/>
</dbReference>
<dbReference type="CDD" id="cd04250">
    <property type="entry name" value="AAK_NAGK-C"/>
    <property type="match status" value="1"/>
</dbReference>
<dbReference type="FunFam" id="3.40.1160.10:FF:000004">
    <property type="entry name" value="Acetylglutamate kinase"/>
    <property type="match status" value="1"/>
</dbReference>
<dbReference type="Gene3D" id="3.40.1160.10">
    <property type="entry name" value="Acetylglutamate kinase-like"/>
    <property type="match status" value="1"/>
</dbReference>
<dbReference type="HAMAP" id="MF_00082">
    <property type="entry name" value="ArgB"/>
    <property type="match status" value="1"/>
</dbReference>
<dbReference type="InterPro" id="IPR036393">
    <property type="entry name" value="AceGlu_kinase-like_sf"/>
</dbReference>
<dbReference type="InterPro" id="IPR004662">
    <property type="entry name" value="AcgluKinase_fam"/>
</dbReference>
<dbReference type="InterPro" id="IPR037528">
    <property type="entry name" value="ArgB"/>
</dbReference>
<dbReference type="InterPro" id="IPR001048">
    <property type="entry name" value="Asp/Glu/Uridylate_kinase"/>
</dbReference>
<dbReference type="InterPro" id="IPR001057">
    <property type="entry name" value="Glu/AcGlu_kinase"/>
</dbReference>
<dbReference type="InterPro" id="IPR041727">
    <property type="entry name" value="NAGK-C"/>
</dbReference>
<dbReference type="NCBIfam" id="TIGR00761">
    <property type="entry name" value="argB"/>
    <property type="match status" value="1"/>
</dbReference>
<dbReference type="PANTHER" id="PTHR23342">
    <property type="entry name" value="N-ACETYLGLUTAMATE SYNTHASE"/>
    <property type="match status" value="1"/>
</dbReference>
<dbReference type="PANTHER" id="PTHR23342:SF0">
    <property type="entry name" value="N-ACETYLGLUTAMATE SYNTHASE, MITOCHONDRIAL"/>
    <property type="match status" value="1"/>
</dbReference>
<dbReference type="Pfam" id="PF00696">
    <property type="entry name" value="AA_kinase"/>
    <property type="match status" value="1"/>
</dbReference>
<dbReference type="PIRSF" id="PIRSF000728">
    <property type="entry name" value="NAGK"/>
    <property type="match status" value="1"/>
</dbReference>
<dbReference type="PRINTS" id="PR00474">
    <property type="entry name" value="GLU5KINASE"/>
</dbReference>
<dbReference type="SUPFAM" id="SSF53633">
    <property type="entry name" value="Carbamate kinase-like"/>
    <property type="match status" value="1"/>
</dbReference>
<sequence>MTIETLSTQSKAQVLAEALPWLKQLHGRVVVIKYGGNAMTDDTLRQAFAADMAFLRNCGIHPVVVHGGGPQITAMLGKLGIEGDFKGGFRVTTPEVLDVARMVLFGQVGRELVNLINAHGPYAVGVTGEDAQLFTAVRRSVNVDGVATDIGLVGDVDHVNAAALMDLIAAHRIPVISTLAPDAEGVVHNINADTAAAALAEALGAEKLLMLTDVEGLYTSWPERDSLVREIDTAALEQLLPRLEAGMIPKVEACLRAVTGGVPSAHVIDGRVEHCVLVELFTNAGTGTKVVSA</sequence>
<protein>
    <recommendedName>
        <fullName evidence="1">Acetylglutamate kinase</fullName>
        <ecNumber evidence="1">2.7.2.8</ecNumber>
    </recommendedName>
    <alternativeName>
        <fullName evidence="1">N-acetyl-L-glutamate 5-phosphotransferase</fullName>
    </alternativeName>
    <alternativeName>
        <fullName evidence="1">NAG kinase</fullName>
        <shortName evidence="1">NAGK</shortName>
    </alternativeName>
</protein>
<comment type="function">
    <text evidence="1">Catalyzes the ATP-dependent phosphorylation of N-acetyl-L-glutamate.</text>
</comment>
<comment type="catalytic activity">
    <reaction evidence="1">
        <text>N-acetyl-L-glutamate + ATP = N-acetyl-L-glutamyl 5-phosphate + ADP</text>
        <dbReference type="Rhea" id="RHEA:14629"/>
        <dbReference type="ChEBI" id="CHEBI:30616"/>
        <dbReference type="ChEBI" id="CHEBI:44337"/>
        <dbReference type="ChEBI" id="CHEBI:57936"/>
        <dbReference type="ChEBI" id="CHEBI:456216"/>
        <dbReference type="EC" id="2.7.2.8"/>
    </reaction>
</comment>
<comment type="pathway">
    <text evidence="1">Amino-acid biosynthesis; L-arginine biosynthesis; N(2)-acetyl-L-ornithine from L-glutamate: step 2/4.</text>
</comment>
<comment type="subcellular location">
    <subcellularLocation>
        <location evidence="1">Cytoplasm</location>
    </subcellularLocation>
</comment>
<comment type="similarity">
    <text evidence="1">Belongs to the acetylglutamate kinase family. ArgB subfamily.</text>
</comment>